<reference key="1">
    <citation type="submission" date="1995-10" db="EMBL/GenBank/DDBJ databases">
        <authorList>
            <person name="Delius H."/>
        </authorList>
    </citation>
    <scope>NUCLEOTIDE SEQUENCE [GENOMIC DNA]</scope>
</reference>
<sequence length="512" mass="57951">MSVWLPASGKVYLPPSTPVAKVQSTDEYIQRTNIFYHAYSDRLLTVGHPYFNVYNNDGTVLEVPKVSGNQHRVFRLKLPDPNRFALADMSVYNPEKERLVWGCRGVEIGRGQPLGVGTSGHPLFNKVNDTENPVSYRTQASSTDDRQNTSFDPKQIQMFIIGCAPCIGEHWEVAERCAGDNNDAGRCPPIKLVNSVIQDGDMADIGYGNLNFRTLQQSRSDVSLDIVNETCKYPDFLKMQNDVYGDSCFFFARREQCYARHFFVRGGKPGDDIPGEQIDAGTYKNDFYIPAATGQTQKNIGNSMYFPTVSGSLVSSDAQLFNRPFWLQRAQGHNNGICWANQLFITVVDNTRNTNFSISVYTENGKVTDINEYDANKFREYQRHVEEYEISLILQLCKIPLKADVLAQINAMNPSLLEEWQLGFVPAPDNPLQSTYRYIESLATPCPDKVAPKEREDPYAPYTFWNVDLSERLSLELDQYSLGRKFLFQAGLVQKTSKKTSNVSKGTKRKRT</sequence>
<name>VL1_HPV24</name>
<gene>
    <name evidence="1" type="primary">L1</name>
</gene>
<organismHost>
    <name type="scientific">Homo sapiens</name>
    <name type="common">Human</name>
    <dbReference type="NCBI Taxonomy" id="9606"/>
</organismHost>
<evidence type="ECO:0000255" key="1">
    <source>
        <dbReference type="HAMAP-Rule" id="MF_04002"/>
    </source>
</evidence>
<comment type="function">
    <text evidence="1">Forms an icosahedral capsid with a T=7 symmetry and a 50 nm diameter. The capsid is composed of 72 pentamers linked to each other by disulfide bonds and associated with L2 proteins. Binds to heparan sulfate proteoglycans on cell surface of basal layer keratinocytes to provide initial virion attachment. This binding mediates a conformational change in the virus capsid that facilitates efficient infection. The virion enters the host cell via endocytosis. During virus trafficking, L1 protein dissociates from the viral DNA and the genomic DNA is released to the host nucleus. The virion assembly takes place within the cell nucleus. Encapsulates the genomic DNA together with protein L2.</text>
</comment>
<comment type="subunit">
    <text evidence="1">Self-assembles into homopentamers. The capsid has an icosahedral symmetry and consists of 72 capsomers, with each capsomer being a pentamer of L1. Interacts with the minor capsid protein L2; this interaction is necessary for viral genome encapsidation. Interacts with protein E2; this interaction enhances E2-dependent replication and transcription activation.</text>
</comment>
<comment type="subcellular location">
    <subcellularLocation>
        <location evidence="1">Virion</location>
    </subcellularLocation>
    <subcellularLocation>
        <location evidence="1">Host nucleus</location>
    </subcellularLocation>
</comment>
<comment type="similarity">
    <text evidence="1">Belongs to the papillomaviridae L1 protein family.</text>
</comment>
<proteinExistence type="inferred from homology"/>
<dbReference type="EMBL" id="U31782">
    <property type="protein sequence ID" value="AAA79421.1"/>
    <property type="molecule type" value="Genomic_DNA"/>
</dbReference>
<dbReference type="SMR" id="P50790"/>
<dbReference type="Proteomes" id="UP000158064">
    <property type="component" value="Genome"/>
</dbReference>
<dbReference type="GO" id="GO:0042025">
    <property type="term" value="C:host cell nucleus"/>
    <property type="evidence" value="ECO:0007669"/>
    <property type="project" value="UniProtKB-SubCell"/>
</dbReference>
<dbReference type="GO" id="GO:0039620">
    <property type="term" value="C:T=7 icosahedral viral capsid"/>
    <property type="evidence" value="ECO:0007669"/>
    <property type="project" value="UniProtKB-UniRule"/>
</dbReference>
<dbReference type="GO" id="GO:0005198">
    <property type="term" value="F:structural molecule activity"/>
    <property type="evidence" value="ECO:0007669"/>
    <property type="project" value="UniProtKB-UniRule"/>
</dbReference>
<dbReference type="GO" id="GO:0075509">
    <property type="term" value="P:endocytosis involved in viral entry into host cell"/>
    <property type="evidence" value="ECO:0007669"/>
    <property type="project" value="UniProtKB-KW"/>
</dbReference>
<dbReference type="GO" id="GO:0019062">
    <property type="term" value="P:virion attachment to host cell"/>
    <property type="evidence" value="ECO:0007669"/>
    <property type="project" value="UniProtKB-UniRule"/>
</dbReference>
<dbReference type="Gene3D" id="2.60.175.20">
    <property type="entry name" value="Major capsid L1 (late) superfamily, Papillomavirus"/>
    <property type="match status" value="2"/>
</dbReference>
<dbReference type="HAMAP" id="MF_04002">
    <property type="entry name" value="PPV_L1"/>
    <property type="match status" value="1"/>
</dbReference>
<dbReference type="InterPro" id="IPR002210">
    <property type="entry name" value="Capsid_L1_Papillomavir"/>
</dbReference>
<dbReference type="InterPro" id="IPR036973">
    <property type="entry name" value="Capsid_L1_sf_Papillomavir"/>
</dbReference>
<dbReference type="InterPro" id="IPR011222">
    <property type="entry name" value="dsDNA_vir_gr_I_capsid"/>
</dbReference>
<dbReference type="Pfam" id="PF00500">
    <property type="entry name" value="Late_protein_L1"/>
    <property type="match status" value="1"/>
</dbReference>
<dbReference type="PRINTS" id="PR00865">
    <property type="entry name" value="HPVCAPSIDL1"/>
</dbReference>
<dbReference type="SUPFAM" id="SSF88648">
    <property type="entry name" value="Group I dsDNA viruses"/>
    <property type="match status" value="1"/>
</dbReference>
<keyword id="KW-0167">Capsid protein</keyword>
<keyword id="KW-1015">Disulfide bond</keyword>
<keyword id="KW-1048">Host nucleus</keyword>
<keyword id="KW-0945">Host-virus interaction</keyword>
<keyword id="KW-0426">Late protein</keyword>
<keyword id="KW-1185">Reference proteome</keyword>
<keyword id="KW-1145">T=7 icosahedral capsid protein</keyword>
<keyword id="KW-1161">Viral attachment to host cell</keyword>
<keyword id="KW-1162">Viral penetration into host cytoplasm</keyword>
<keyword id="KW-0946">Virion</keyword>
<keyword id="KW-1164">Virus endocytosis by host</keyword>
<keyword id="KW-1160">Virus entry into host cell</keyword>
<organism>
    <name type="scientific">Human papillomavirus 24</name>
    <dbReference type="NCBI Taxonomy" id="37956"/>
    <lineage>
        <taxon>Viruses</taxon>
        <taxon>Monodnaviria</taxon>
        <taxon>Shotokuvirae</taxon>
        <taxon>Cossaviricota</taxon>
        <taxon>Papovaviricetes</taxon>
        <taxon>Zurhausenvirales</taxon>
        <taxon>Papillomaviridae</taxon>
        <taxon>Firstpapillomavirinae</taxon>
        <taxon>Betapapillomavirus</taxon>
        <taxon>Betapapillomavirus 1</taxon>
    </lineage>
</organism>
<protein>
    <recommendedName>
        <fullName evidence="1">Major capsid protein L1</fullName>
    </recommendedName>
</protein>
<feature type="chain" id="PRO_0000133508" description="Major capsid protein L1">
    <location>
        <begin position="1"/>
        <end position="512"/>
    </location>
</feature>
<feature type="disulfide bond" description="Interchain (with C-446)" evidence="1">
    <location>
        <position position="177"/>
    </location>
</feature>
<feature type="disulfide bond" description="Interchain (with C-177)" evidence="1">
    <location>
        <position position="446"/>
    </location>
</feature>
<accession>P50790</accession>